<keyword id="KW-0028">Amino-acid biosynthesis</keyword>
<keyword id="KW-0223">Dioxygenase</keyword>
<keyword id="KW-0408">Iron</keyword>
<keyword id="KW-0479">Metal-binding</keyword>
<keyword id="KW-0486">Methionine biosynthesis</keyword>
<keyword id="KW-0533">Nickel</keyword>
<keyword id="KW-0560">Oxidoreductase</keyword>
<organism>
    <name type="scientific">Yersinia pseudotuberculosis serotype IB (strain PB1/+)</name>
    <dbReference type="NCBI Taxonomy" id="502801"/>
    <lineage>
        <taxon>Bacteria</taxon>
        <taxon>Pseudomonadati</taxon>
        <taxon>Pseudomonadota</taxon>
        <taxon>Gammaproteobacteria</taxon>
        <taxon>Enterobacterales</taxon>
        <taxon>Yersiniaceae</taxon>
        <taxon>Yersinia</taxon>
    </lineage>
</organism>
<name>MTND_YERPB</name>
<sequence>MSGLTIFSDQQPEKPLWQSHNAEEIQQQLTAIGVRFERWQADCELGENPQPEAVIAAYQHEIDRLVAENGYKSWDVISMRPDNPQREALREKFLSEHTHGEDEVRFFVEGSGLFCLHLNEKVYQILCEKNDLLSVPADIPHWFDMGSAPNFTAIRVFDNPEGWIARSTGDNIADGYPRLA</sequence>
<accession>B2K632</accession>
<evidence type="ECO:0000255" key="1">
    <source>
        <dbReference type="HAMAP-Rule" id="MF_01682"/>
    </source>
</evidence>
<dbReference type="EC" id="1.13.11.54" evidence="1"/>
<dbReference type="EC" id="1.13.11.53" evidence="1"/>
<dbReference type="EMBL" id="CP001048">
    <property type="protein sequence ID" value="ACC87898.1"/>
    <property type="molecule type" value="Genomic_DNA"/>
</dbReference>
<dbReference type="RefSeq" id="WP_011191833.1">
    <property type="nucleotide sequence ID" value="NZ_CP009780.1"/>
</dbReference>
<dbReference type="SMR" id="B2K632"/>
<dbReference type="KEGG" id="ypb:YPTS_0917"/>
<dbReference type="PATRIC" id="fig|502801.10.peg.250"/>
<dbReference type="UniPathway" id="UPA00904">
    <property type="reaction ID" value="UER00878"/>
</dbReference>
<dbReference type="GO" id="GO:0010308">
    <property type="term" value="F:acireductone dioxygenase (Ni2+-requiring) activity"/>
    <property type="evidence" value="ECO:0007669"/>
    <property type="project" value="UniProtKB-UniRule"/>
</dbReference>
<dbReference type="GO" id="GO:0010309">
    <property type="term" value="F:acireductone dioxygenase [iron(II)-requiring] activity"/>
    <property type="evidence" value="ECO:0007669"/>
    <property type="project" value="UniProtKB-UniRule"/>
</dbReference>
<dbReference type="GO" id="GO:0005506">
    <property type="term" value="F:iron ion binding"/>
    <property type="evidence" value="ECO:0007669"/>
    <property type="project" value="UniProtKB-UniRule"/>
</dbReference>
<dbReference type="GO" id="GO:0016151">
    <property type="term" value="F:nickel cation binding"/>
    <property type="evidence" value="ECO:0007669"/>
    <property type="project" value="UniProtKB-UniRule"/>
</dbReference>
<dbReference type="GO" id="GO:0019509">
    <property type="term" value="P:L-methionine salvage from methylthioadenosine"/>
    <property type="evidence" value="ECO:0007669"/>
    <property type="project" value="UniProtKB-UniRule"/>
</dbReference>
<dbReference type="GO" id="GO:0019284">
    <property type="term" value="P:L-methionine salvage from S-adenosylmethionine"/>
    <property type="evidence" value="ECO:0007669"/>
    <property type="project" value="InterPro"/>
</dbReference>
<dbReference type="CDD" id="cd02232">
    <property type="entry name" value="cupin_ARD"/>
    <property type="match status" value="1"/>
</dbReference>
<dbReference type="Gene3D" id="2.60.120.10">
    <property type="entry name" value="Jelly Rolls"/>
    <property type="match status" value="1"/>
</dbReference>
<dbReference type="HAMAP" id="MF_01682">
    <property type="entry name" value="Salvage_MtnD"/>
    <property type="match status" value="1"/>
</dbReference>
<dbReference type="InterPro" id="IPR004313">
    <property type="entry name" value="ARD"/>
</dbReference>
<dbReference type="InterPro" id="IPR023956">
    <property type="entry name" value="ARD_bac"/>
</dbReference>
<dbReference type="InterPro" id="IPR014710">
    <property type="entry name" value="RmlC-like_jellyroll"/>
</dbReference>
<dbReference type="InterPro" id="IPR011051">
    <property type="entry name" value="RmlC_Cupin_sf"/>
</dbReference>
<dbReference type="PANTHER" id="PTHR23418">
    <property type="entry name" value="ACIREDUCTONE DIOXYGENASE"/>
    <property type="match status" value="1"/>
</dbReference>
<dbReference type="PANTHER" id="PTHR23418:SF0">
    <property type="entry name" value="ACIREDUCTONE DIOXYGENASE"/>
    <property type="match status" value="1"/>
</dbReference>
<dbReference type="Pfam" id="PF03079">
    <property type="entry name" value="ARD"/>
    <property type="match status" value="1"/>
</dbReference>
<dbReference type="SUPFAM" id="SSF51182">
    <property type="entry name" value="RmlC-like cupins"/>
    <property type="match status" value="1"/>
</dbReference>
<reference key="1">
    <citation type="submission" date="2008-04" db="EMBL/GenBank/DDBJ databases">
        <title>Complete sequence of Yersinia pseudotuberculosis PB1/+.</title>
        <authorList>
            <person name="Copeland A."/>
            <person name="Lucas S."/>
            <person name="Lapidus A."/>
            <person name="Glavina del Rio T."/>
            <person name="Dalin E."/>
            <person name="Tice H."/>
            <person name="Bruce D."/>
            <person name="Goodwin L."/>
            <person name="Pitluck S."/>
            <person name="Munk A.C."/>
            <person name="Brettin T."/>
            <person name="Detter J.C."/>
            <person name="Han C."/>
            <person name="Tapia R."/>
            <person name="Schmutz J."/>
            <person name="Larimer F."/>
            <person name="Land M."/>
            <person name="Hauser L."/>
            <person name="Challacombe J.F."/>
            <person name="Green L."/>
            <person name="Lindler L.E."/>
            <person name="Nikolich M.P."/>
            <person name="Richardson P."/>
        </authorList>
    </citation>
    <scope>NUCLEOTIDE SEQUENCE [LARGE SCALE GENOMIC DNA]</scope>
    <source>
        <strain>PB1/+</strain>
    </source>
</reference>
<gene>
    <name evidence="1" type="primary">mtnD</name>
    <name type="ordered locus">YPTS_0917</name>
</gene>
<comment type="function">
    <text evidence="1">Catalyzes 2 different reactions between oxygen and the acireductone 1,2-dihydroxy-3-keto-5-methylthiopentene (DHK-MTPene) depending upon the metal bound in the active site. Fe-containing acireductone dioxygenase (Fe-ARD) produces formate and 2-keto-4-methylthiobutyrate (KMTB), the alpha-ketoacid precursor of methionine in the methionine recycle pathway. Ni-containing acireductone dioxygenase (Ni-ARD) produces methylthiopropionate, carbon monoxide and formate, and does not lie on the methionine recycle pathway.</text>
</comment>
<comment type="catalytic activity">
    <reaction evidence="1">
        <text>1,2-dihydroxy-5-(methylsulfanyl)pent-1-en-3-one + O2 = 3-(methylsulfanyl)propanoate + CO + formate + 2 H(+)</text>
        <dbReference type="Rhea" id="RHEA:14161"/>
        <dbReference type="ChEBI" id="CHEBI:15378"/>
        <dbReference type="ChEBI" id="CHEBI:15379"/>
        <dbReference type="ChEBI" id="CHEBI:15740"/>
        <dbReference type="ChEBI" id="CHEBI:17245"/>
        <dbReference type="ChEBI" id="CHEBI:49016"/>
        <dbReference type="ChEBI" id="CHEBI:49252"/>
        <dbReference type="EC" id="1.13.11.53"/>
    </reaction>
</comment>
<comment type="catalytic activity">
    <reaction evidence="1">
        <text>1,2-dihydroxy-5-(methylsulfanyl)pent-1-en-3-one + O2 = 4-methylsulfanyl-2-oxobutanoate + formate + 2 H(+)</text>
        <dbReference type="Rhea" id="RHEA:24504"/>
        <dbReference type="ChEBI" id="CHEBI:15378"/>
        <dbReference type="ChEBI" id="CHEBI:15379"/>
        <dbReference type="ChEBI" id="CHEBI:15740"/>
        <dbReference type="ChEBI" id="CHEBI:16723"/>
        <dbReference type="ChEBI" id="CHEBI:49252"/>
        <dbReference type="EC" id="1.13.11.54"/>
    </reaction>
</comment>
<comment type="cofactor">
    <cofactor evidence="1">
        <name>Fe(2+)</name>
        <dbReference type="ChEBI" id="CHEBI:29033"/>
    </cofactor>
    <text evidence="1">Binds 1 Fe(2+) cation per monomer.</text>
</comment>
<comment type="cofactor">
    <cofactor evidence="1">
        <name>Ni(2+)</name>
        <dbReference type="ChEBI" id="CHEBI:49786"/>
    </cofactor>
    <text evidence="1">Binds 1 nickel ion per monomer.</text>
</comment>
<comment type="pathway">
    <text evidence="1">Amino-acid biosynthesis; L-methionine biosynthesis via salvage pathway; L-methionine from S-methyl-5-thio-alpha-D-ribose 1-phosphate: step 5/6.</text>
</comment>
<comment type="subunit">
    <text evidence="1">Monomer.</text>
</comment>
<comment type="similarity">
    <text evidence="1">Belongs to the acireductone dioxygenase (ARD) family.</text>
</comment>
<feature type="chain" id="PRO_0000359262" description="Acireductone dioxygenase">
    <location>
        <begin position="1"/>
        <end position="180"/>
    </location>
</feature>
<feature type="binding site" evidence="1">
    <location>
        <position position="97"/>
    </location>
    <ligand>
        <name>Fe(2+)</name>
        <dbReference type="ChEBI" id="CHEBI:29033"/>
    </ligand>
</feature>
<feature type="binding site" evidence="1">
    <location>
        <position position="97"/>
    </location>
    <ligand>
        <name>Ni(2+)</name>
        <dbReference type="ChEBI" id="CHEBI:49786"/>
    </ligand>
</feature>
<feature type="binding site" evidence="1">
    <location>
        <position position="99"/>
    </location>
    <ligand>
        <name>Fe(2+)</name>
        <dbReference type="ChEBI" id="CHEBI:29033"/>
    </ligand>
</feature>
<feature type="binding site" evidence="1">
    <location>
        <position position="99"/>
    </location>
    <ligand>
        <name>Ni(2+)</name>
        <dbReference type="ChEBI" id="CHEBI:49786"/>
    </ligand>
</feature>
<feature type="binding site" evidence="1">
    <location>
        <position position="103"/>
    </location>
    <ligand>
        <name>Fe(2+)</name>
        <dbReference type="ChEBI" id="CHEBI:29033"/>
    </ligand>
</feature>
<feature type="binding site" evidence="1">
    <location>
        <position position="103"/>
    </location>
    <ligand>
        <name>Ni(2+)</name>
        <dbReference type="ChEBI" id="CHEBI:49786"/>
    </ligand>
</feature>
<feature type="binding site" evidence="1">
    <location>
        <position position="141"/>
    </location>
    <ligand>
        <name>Fe(2+)</name>
        <dbReference type="ChEBI" id="CHEBI:29033"/>
    </ligand>
</feature>
<feature type="binding site" evidence="1">
    <location>
        <position position="141"/>
    </location>
    <ligand>
        <name>Ni(2+)</name>
        <dbReference type="ChEBI" id="CHEBI:49786"/>
    </ligand>
</feature>
<feature type="site" description="May play a role in metal incorporation in vivo" evidence="1">
    <location>
        <position position="96"/>
    </location>
</feature>
<feature type="site" description="May play a role in transmitting local conformational changes" evidence="1">
    <location>
        <position position="102"/>
    </location>
</feature>
<feature type="site" description="Important to generate the dianion" evidence="1">
    <location>
        <position position="105"/>
    </location>
</feature>
<proteinExistence type="inferred from homology"/>
<protein>
    <recommendedName>
        <fullName evidence="1">Acireductone dioxygenase</fullName>
    </recommendedName>
    <alternativeName>
        <fullName evidence="1">1,2-dihydroxy-3-keto-5-methylthiopentene dioxygenase</fullName>
        <shortName evidence="1">DHK-MTPene dioxygenase</shortName>
    </alternativeName>
    <alternativeName>
        <fullName evidence="1">Acireductone dioxygenase (Fe(2+)-requiring)</fullName>
        <shortName evidence="1">ARD'</shortName>
        <shortName evidence="1">Fe-ARD</shortName>
        <ecNumber evidence="1">1.13.11.54</ecNumber>
    </alternativeName>
    <alternativeName>
        <fullName evidence="1">Acireductone dioxygenase (Ni(2+)-requiring)</fullName>
        <shortName evidence="1">ARD</shortName>
        <shortName evidence="1">Ni-ARD</shortName>
        <ecNumber evidence="1">1.13.11.53</ecNumber>
    </alternativeName>
</protein>